<gene>
    <name evidence="1" type="primary">psbN</name>
</gene>
<keyword id="KW-0150">Chloroplast</keyword>
<keyword id="KW-0472">Membrane</keyword>
<keyword id="KW-0934">Plastid</keyword>
<keyword id="KW-0793">Thylakoid</keyword>
<keyword id="KW-0812">Transmembrane</keyword>
<keyword id="KW-1133">Transmembrane helix</keyword>
<organism>
    <name type="scientific">Populus alba</name>
    <name type="common">White poplar</name>
    <dbReference type="NCBI Taxonomy" id="43335"/>
    <lineage>
        <taxon>Eukaryota</taxon>
        <taxon>Viridiplantae</taxon>
        <taxon>Streptophyta</taxon>
        <taxon>Embryophyta</taxon>
        <taxon>Tracheophyta</taxon>
        <taxon>Spermatophyta</taxon>
        <taxon>Magnoliopsida</taxon>
        <taxon>eudicotyledons</taxon>
        <taxon>Gunneridae</taxon>
        <taxon>Pentapetalae</taxon>
        <taxon>rosids</taxon>
        <taxon>fabids</taxon>
        <taxon>Malpighiales</taxon>
        <taxon>Salicaceae</taxon>
        <taxon>Saliceae</taxon>
        <taxon>Populus</taxon>
    </lineage>
</organism>
<accession>Q14FC9</accession>
<reference key="1">
    <citation type="submission" date="2005-03" db="EMBL/GenBank/DDBJ databases">
        <title>Complete structure of the chloroplast genome of Populus alba.</title>
        <authorList>
            <person name="Okumura S."/>
            <person name="Yamashita A."/>
            <person name="Kanamoto H."/>
            <person name="Hattori M."/>
            <person name="Takase H."/>
            <person name="Tomizawa K."/>
        </authorList>
    </citation>
    <scope>NUCLEOTIDE SEQUENCE [LARGE SCALE GENOMIC DNA]</scope>
</reference>
<name>PSBN_POPAL</name>
<sequence>METATLVAISISGLLVSFTGYALYTAFGQPSQQLRDPFEEHGD</sequence>
<comment type="function">
    <text evidence="1">May play a role in photosystem I and II biogenesis.</text>
</comment>
<comment type="subcellular location">
    <subcellularLocation>
        <location evidence="1">Plastid</location>
        <location evidence="1">Chloroplast thylakoid membrane</location>
        <topology evidence="1">Single-pass membrane protein</topology>
    </subcellularLocation>
</comment>
<comment type="similarity">
    <text evidence="1">Belongs to the PsbN family.</text>
</comment>
<comment type="caution">
    <text evidence="1">Originally thought to be a component of PSII; based on experiments in Synechocystis, N.tabacum and barley, and its absence from PSII in T.elongatus and T.vulcanus, this is probably not true.</text>
</comment>
<dbReference type="EMBL" id="AP008956">
    <property type="protein sequence ID" value="BAE97233.1"/>
    <property type="molecule type" value="Genomic_DNA"/>
</dbReference>
<dbReference type="RefSeq" id="YP_665586.1">
    <property type="nucleotide sequence ID" value="NC_008235.1"/>
</dbReference>
<dbReference type="SMR" id="Q14FC9"/>
<dbReference type="GeneID" id="4178170"/>
<dbReference type="KEGG" id="palz:4178170"/>
<dbReference type="OrthoDB" id="3727at3646"/>
<dbReference type="GO" id="GO:0009535">
    <property type="term" value="C:chloroplast thylakoid membrane"/>
    <property type="evidence" value="ECO:0007669"/>
    <property type="project" value="UniProtKB-SubCell"/>
</dbReference>
<dbReference type="GO" id="GO:0015979">
    <property type="term" value="P:photosynthesis"/>
    <property type="evidence" value="ECO:0007669"/>
    <property type="project" value="InterPro"/>
</dbReference>
<dbReference type="HAMAP" id="MF_00293">
    <property type="entry name" value="PSII_PsbN"/>
    <property type="match status" value="1"/>
</dbReference>
<dbReference type="InterPro" id="IPR003398">
    <property type="entry name" value="PSII_PsbN"/>
</dbReference>
<dbReference type="PANTHER" id="PTHR35326">
    <property type="entry name" value="PROTEIN PSBN"/>
    <property type="match status" value="1"/>
</dbReference>
<dbReference type="PANTHER" id="PTHR35326:SF3">
    <property type="entry name" value="PROTEIN PSBN"/>
    <property type="match status" value="1"/>
</dbReference>
<dbReference type="Pfam" id="PF02468">
    <property type="entry name" value="PsbN"/>
    <property type="match status" value="1"/>
</dbReference>
<proteinExistence type="inferred from homology"/>
<geneLocation type="chloroplast"/>
<feature type="chain" id="PRO_0000276279" description="Protein PsbN">
    <location>
        <begin position="1"/>
        <end position="43"/>
    </location>
</feature>
<feature type="transmembrane region" description="Helical" evidence="1">
    <location>
        <begin position="5"/>
        <end position="27"/>
    </location>
</feature>
<protein>
    <recommendedName>
        <fullName evidence="1">Protein PsbN</fullName>
    </recommendedName>
</protein>
<evidence type="ECO:0000255" key="1">
    <source>
        <dbReference type="HAMAP-Rule" id="MF_00293"/>
    </source>
</evidence>